<keyword id="KW-0694">RNA-binding</keyword>
<keyword id="KW-0346">Stress response</keyword>
<accession>A1W582</accession>
<protein>
    <recommendedName>
        <fullName evidence="1">RNA-binding protein Hfq</fullName>
    </recommendedName>
</protein>
<proteinExistence type="inferred from homology"/>
<dbReference type="EMBL" id="CP000539">
    <property type="protein sequence ID" value="ABM41407.1"/>
    <property type="molecule type" value="Genomic_DNA"/>
</dbReference>
<dbReference type="SMR" id="A1W582"/>
<dbReference type="STRING" id="232721.Ajs_1175"/>
<dbReference type="KEGG" id="ajs:Ajs_1175"/>
<dbReference type="eggNOG" id="COG1923">
    <property type="taxonomic scope" value="Bacteria"/>
</dbReference>
<dbReference type="HOGENOM" id="CLU_113688_2_2_4"/>
<dbReference type="Proteomes" id="UP000000645">
    <property type="component" value="Chromosome"/>
</dbReference>
<dbReference type="GO" id="GO:0005829">
    <property type="term" value="C:cytosol"/>
    <property type="evidence" value="ECO:0007669"/>
    <property type="project" value="TreeGrafter"/>
</dbReference>
<dbReference type="GO" id="GO:0003723">
    <property type="term" value="F:RNA binding"/>
    <property type="evidence" value="ECO:0007669"/>
    <property type="project" value="UniProtKB-UniRule"/>
</dbReference>
<dbReference type="GO" id="GO:0006355">
    <property type="term" value="P:regulation of DNA-templated transcription"/>
    <property type="evidence" value="ECO:0007669"/>
    <property type="project" value="InterPro"/>
</dbReference>
<dbReference type="GO" id="GO:0043487">
    <property type="term" value="P:regulation of RNA stability"/>
    <property type="evidence" value="ECO:0007669"/>
    <property type="project" value="TreeGrafter"/>
</dbReference>
<dbReference type="GO" id="GO:0045974">
    <property type="term" value="P:regulation of translation, ncRNA-mediated"/>
    <property type="evidence" value="ECO:0007669"/>
    <property type="project" value="TreeGrafter"/>
</dbReference>
<dbReference type="CDD" id="cd01716">
    <property type="entry name" value="Hfq"/>
    <property type="match status" value="1"/>
</dbReference>
<dbReference type="FunFam" id="2.30.30.100:FF:000001">
    <property type="entry name" value="RNA-binding protein Hfq"/>
    <property type="match status" value="1"/>
</dbReference>
<dbReference type="Gene3D" id="2.30.30.100">
    <property type="match status" value="1"/>
</dbReference>
<dbReference type="HAMAP" id="MF_00436">
    <property type="entry name" value="Hfq"/>
    <property type="match status" value="1"/>
</dbReference>
<dbReference type="InterPro" id="IPR005001">
    <property type="entry name" value="Hfq"/>
</dbReference>
<dbReference type="InterPro" id="IPR010920">
    <property type="entry name" value="LSM_dom_sf"/>
</dbReference>
<dbReference type="InterPro" id="IPR047575">
    <property type="entry name" value="Sm"/>
</dbReference>
<dbReference type="NCBIfam" id="TIGR02383">
    <property type="entry name" value="Hfq"/>
    <property type="match status" value="1"/>
</dbReference>
<dbReference type="NCBIfam" id="NF001602">
    <property type="entry name" value="PRK00395.1"/>
    <property type="match status" value="1"/>
</dbReference>
<dbReference type="PANTHER" id="PTHR34772">
    <property type="entry name" value="RNA-BINDING PROTEIN HFQ"/>
    <property type="match status" value="1"/>
</dbReference>
<dbReference type="PANTHER" id="PTHR34772:SF1">
    <property type="entry name" value="RNA-BINDING PROTEIN HFQ"/>
    <property type="match status" value="1"/>
</dbReference>
<dbReference type="Pfam" id="PF17209">
    <property type="entry name" value="Hfq"/>
    <property type="match status" value="1"/>
</dbReference>
<dbReference type="SUPFAM" id="SSF50182">
    <property type="entry name" value="Sm-like ribonucleoproteins"/>
    <property type="match status" value="1"/>
</dbReference>
<dbReference type="PROSITE" id="PS52002">
    <property type="entry name" value="SM"/>
    <property type="match status" value="1"/>
</dbReference>
<gene>
    <name evidence="1" type="primary">hfq</name>
    <name type="ordered locus">Ajs_1175</name>
</gene>
<feature type="chain" id="PRO_1000025884" description="RNA-binding protein Hfq">
    <location>
        <begin position="1"/>
        <end position="83"/>
    </location>
</feature>
<feature type="domain" description="Sm" evidence="2">
    <location>
        <begin position="10"/>
        <end position="69"/>
    </location>
</feature>
<name>HFQ_ACISJ</name>
<comment type="function">
    <text evidence="1">RNA chaperone that binds small regulatory RNA (sRNAs) and mRNAs to facilitate mRNA translational regulation in response to envelope stress, environmental stress and changes in metabolite concentrations. Also binds with high specificity to tRNAs.</text>
</comment>
<comment type="subunit">
    <text evidence="1">Homohexamer.</text>
</comment>
<comment type="similarity">
    <text evidence="1">Belongs to the Hfq family.</text>
</comment>
<sequence>MSNKGQLLQDPFLNALRREHVPVSIYLVNGIKLQGQIESFDQYVVLLRNTVTQMVYKHAISTIVPGRAVNFSTAEPAADGDNQ</sequence>
<reference key="1">
    <citation type="submission" date="2006-12" db="EMBL/GenBank/DDBJ databases">
        <title>Complete sequence of chromosome 1 of Acidovorax sp. JS42.</title>
        <authorList>
            <person name="Copeland A."/>
            <person name="Lucas S."/>
            <person name="Lapidus A."/>
            <person name="Barry K."/>
            <person name="Detter J.C."/>
            <person name="Glavina del Rio T."/>
            <person name="Dalin E."/>
            <person name="Tice H."/>
            <person name="Pitluck S."/>
            <person name="Chertkov O."/>
            <person name="Brettin T."/>
            <person name="Bruce D."/>
            <person name="Han C."/>
            <person name="Tapia R."/>
            <person name="Gilna P."/>
            <person name="Schmutz J."/>
            <person name="Larimer F."/>
            <person name="Land M."/>
            <person name="Hauser L."/>
            <person name="Kyrpides N."/>
            <person name="Kim E."/>
            <person name="Stahl D."/>
            <person name="Richardson P."/>
        </authorList>
    </citation>
    <scope>NUCLEOTIDE SEQUENCE [LARGE SCALE GENOMIC DNA]</scope>
    <source>
        <strain>JS42</strain>
    </source>
</reference>
<evidence type="ECO:0000255" key="1">
    <source>
        <dbReference type="HAMAP-Rule" id="MF_00436"/>
    </source>
</evidence>
<evidence type="ECO:0000255" key="2">
    <source>
        <dbReference type="PROSITE-ProRule" id="PRU01346"/>
    </source>
</evidence>
<organism>
    <name type="scientific">Acidovorax sp. (strain JS42)</name>
    <dbReference type="NCBI Taxonomy" id="232721"/>
    <lineage>
        <taxon>Bacteria</taxon>
        <taxon>Pseudomonadati</taxon>
        <taxon>Pseudomonadota</taxon>
        <taxon>Betaproteobacteria</taxon>
        <taxon>Burkholderiales</taxon>
        <taxon>Comamonadaceae</taxon>
        <taxon>Acidovorax</taxon>
    </lineage>
</organism>